<comment type="function">
    <text evidence="2">Plays a role in controlling food intake and regulating body size.</text>
</comment>
<comment type="subcellular location">
    <subcellularLocation>
        <location evidence="1">Secreted</location>
    </subcellularLocation>
</comment>
<comment type="tissue specificity">
    <text evidence="5">Expressed in all body parts of larva, pupae and adults.</text>
</comment>
<comment type="similarity">
    <text evidence="3">Belongs to the NPY family.</text>
</comment>
<feature type="signal peptide" evidence="3">
    <location>
        <begin position="1"/>
        <end position="22"/>
    </location>
</feature>
<feature type="propeptide" id="PRO_0000287899" evidence="2">
    <location>
        <begin position="23"/>
        <end position="56"/>
    </location>
</feature>
<feature type="peptide" id="PRO_0000287900" description="RLRF peptide 1" evidence="2">
    <location>
        <begin position="59"/>
        <end position="69"/>
    </location>
</feature>
<feature type="peptide" id="PRO_0000287901" description="sNPF-associated peptide" evidence="2">
    <location>
        <begin position="73"/>
        <end position="89"/>
    </location>
</feature>
<feature type="peptide" id="PRO_0000287902" description="RLRF peptide 2" evidence="2">
    <location>
        <begin position="91"/>
        <end position="101"/>
    </location>
</feature>
<feature type="peptide" id="PRO_0000287903" description="sNPF peptide 2" evidence="5">
    <location>
        <begin position="104"/>
        <end position="122"/>
    </location>
</feature>
<feature type="peptide" id="PRO_0000287904" description="RLRW peptide 1" evidence="5">
    <location>
        <begin position="125"/>
        <end position="132"/>
    </location>
</feature>
<feature type="peptide" id="PRO_0000287905" description="sNPF peptide 3" evidence="5">
    <location>
        <begin position="135"/>
        <end position="153"/>
    </location>
</feature>
<feature type="peptide" id="PRO_0000287906" description="RLRF peptide 3" evidence="5">
    <location>
        <begin position="155"/>
        <end position="165"/>
    </location>
</feature>
<feature type="peptide" id="PRO_0000287907" description="sNPF peptide 4" evidence="5">
    <location>
        <begin position="168"/>
        <end position="194"/>
    </location>
</feature>
<feature type="peptide" id="PRO_0000287908" description="RLRW peptide 2" evidence="5">
    <location>
        <begin position="197"/>
        <end position="204"/>
    </location>
</feature>
<feature type="propeptide" id="PRO_0000287909" evidence="5">
    <location>
        <begin position="207"/>
        <end position="234"/>
    </location>
</feature>
<feature type="region of interest" description="Disordered" evidence="4">
    <location>
        <begin position="181"/>
        <end position="234"/>
    </location>
</feature>
<feature type="compositionally biased region" description="Polar residues" evidence="4">
    <location>
        <begin position="181"/>
        <end position="190"/>
    </location>
</feature>
<feature type="modified residue" description="Phenylalanine amide" evidence="5">
    <location>
        <position position="69"/>
    </location>
</feature>
<feature type="modified residue" description="Phenylalanine amide" evidence="5">
    <location>
        <position position="101"/>
    </location>
</feature>
<feature type="modified residue" description="Tryptophan amide" evidence="5">
    <location>
        <position position="132"/>
    </location>
</feature>
<feature type="modified residue" description="Phenylalanine amide" evidence="5">
    <location>
        <position position="165"/>
    </location>
</feature>
<feature type="modified residue" description="Tryptophan amide" evidence="5">
    <location>
        <position position="204"/>
    </location>
</feature>
<evidence type="ECO:0000250" key="1"/>
<evidence type="ECO:0000250" key="2">
    <source>
        <dbReference type="UniProtKB" id="Q9VIQ0"/>
    </source>
</evidence>
<evidence type="ECO:0000255" key="3"/>
<evidence type="ECO:0000256" key="4">
    <source>
        <dbReference type="SAM" id="MobiDB-lite"/>
    </source>
</evidence>
<evidence type="ECO:0000269" key="5">
    <source>
    </source>
</evidence>
<evidence type="ECO:0000305" key="6"/>
<evidence type="ECO:0000312" key="7">
    <source>
        <dbReference type="EMBL" id="ABD96048.1"/>
    </source>
</evidence>
<proteinExistence type="evidence at protein level"/>
<reference evidence="6 7" key="1">
    <citation type="journal article" date="2007" name="Peptides">
        <title>Characterization and expression of the short neuropeptide F receptor in the African malaria mosquito, Anopheles gambiae.</title>
        <authorList>
            <person name="Garczynski S.F."/>
            <person name="Crim J.W."/>
            <person name="Brown M.R."/>
        </authorList>
    </citation>
    <scope>NUCLEOTIDE SEQUENCE [MRNA]</scope>
    <scope>AMIDATION AT PHE-69; PHE-101; TRP-132; PHE-165 AND TRP-204</scope>
    <scope>TISSUE SPECIFICITY</scope>
    <source>
        <strain>G3</strain>
    </source>
</reference>
<name>SNPF_ANOGA</name>
<dbReference type="EMBL" id="DQ437578">
    <property type="protein sequence ID" value="ABD96048.1"/>
    <property type="molecule type" value="mRNA"/>
</dbReference>
<dbReference type="VEuPathDB" id="VectorBase:AGAMI1_005345"/>
<dbReference type="InParanoid" id="A0SIF1"/>
<dbReference type="Proteomes" id="UP000007062">
    <property type="component" value="Unplaced"/>
</dbReference>
<dbReference type="GO" id="GO:0005576">
    <property type="term" value="C:extracellular region"/>
    <property type="evidence" value="ECO:0000250"/>
    <property type="project" value="UniProtKB"/>
</dbReference>
<dbReference type="GO" id="GO:0005184">
    <property type="term" value="F:neuropeptide hormone activity"/>
    <property type="evidence" value="ECO:0000250"/>
    <property type="project" value="UniProtKB"/>
</dbReference>
<dbReference type="GO" id="GO:0007218">
    <property type="term" value="P:neuropeptide signaling pathway"/>
    <property type="evidence" value="ECO:0000250"/>
    <property type="project" value="UniProtKB"/>
</dbReference>
<dbReference type="GO" id="GO:0040014">
    <property type="term" value="P:regulation of multicellular organism growth"/>
    <property type="evidence" value="ECO:0000250"/>
    <property type="project" value="UniProtKB"/>
</dbReference>
<dbReference type="GO" id="GO:0032095">
    <property type="term" value="P:regulation of response to food"/>
    <property type="evidence" value="ECO:0000250"/>
    <property type="project" value="UniProtKB"/>
</dbReference>
<sequence>MYRINLTTFTLLLVLAVGSLMSESLHPSDGAINDLYEYLLQREYAAPVSYADHQIKRKAVRSPSLRLRFGRRSDPSVPLRPEEDELIDQKAIRAPQLRLRFGRNDPLWTSFNENALLEENFEKRAPSQRLRWGRSNLFGNLVNQFQQDDVMQQKTIRAPQLRLRFGRTDPSWAMYNEHQLTTGQQAQPANEASEKRAPTQRLRWGRSDPALAKDSSEDKALDVEESENTNADDK</sequence>
<protein>
    <recommendedName>
        <fullName>Short neuropeptide F</fullName>
    </recommendedName>
    <component>
        <recommendedName>
            <fullName>sNPF-associated peptide</fullName>
        </recommendedName>
    </component>
    <component>
        <recommendedName>
            <fullName>sNPF peptide 2</fullName>
        </recommendedName>
    </component>
    <component>
        <recommendedName>
            <fullName>sNPF peptide 3</fullName>
        </recommendedName>
    </component>
    <component>
        <recommendedName>
            <fullName>sNPF peptide 4</fullName>
        </recommendedName>
    </component>
    <component>
        <recommendedName>
            <fullName>RLRF peptide 1</fullName>
        </recommendedName>
    </component>
    <component>
        <recommendedName>
            <fullName>RLRF peptide 2</fullName>
        </recommendedName>
    </component>
    <component>
        <recommendedName>
            <fullName>RLRF peptide 3</fullName>
        </recommendedName>
    </component>
    <component>
        <recommendedName>
            <fullName>RLRW peptide 1</fullName>
        </recommendedName>
    </component>
    <component>
        <recommendedName>
            <fullName>RLRW peptide 2</fullName>
        </recommendedName>
    </component>
</protein>
<organism>
    <name type="scientific">Anopheles gambiae</name>
    <name type="common">African malaria mosquito</name>
    <dbReference type="NCBI Taxonomy" id="7165"/>
    <lineage>
        <taxon>Eukaryota</taxon>
        <taxon>Metazoa</taxon>
        <taxon>Ecdysozoa</taxon>
        <taxon>Arthropoda</taxon>
        <taxon>Hexapoda</taxon>
        <taxon>Insecta</taxon>
        <taxon>Pterygota</taxon>
        <taxon>Neoptera</taxon>
        <taxon>Endopterygota</taxon>
        <taxon>Diptera</taxon>
        <taxon>Nematocera</taxon>
        <taxon>Culicoidea</taxon>
        <taxon>Culicidae</taxon>
        <taxon>Anophelinae</taxon>
        <taxon>Anopheles</taxon>
    </lineage>
</organism>
<accession>A0SIF1</accession>
<gene>
    <name evidence="2" type="primary">sNPF</name>
</gene>
<keyword id="KW-0027">Amidation</keyword>
<keyword id="KW-0165">Cleavage on pair of basic residues</keyword>
<keyword id="KW-0527">Neuropeptide</keyword>
<keyword id="KW-1185">Reference proteome</keyword>
<keyword id="KW-0964">Secreted</keyword>
<keyword id="KW-0732">Signal</keyword>